<keyword id="KW-0150">Chloroplast</keyword>
<keyword id="KW-0249">Electron transport</keyword>
<keyword id="KW-0472">Membrane</keyword>
<keyword id="KW-0602">Photosynthesis</keyword>
<keyword id="KW-0934">Plastid</keyword>
<keyword id="KW-0793">Thylakoid</keyword>
<keyword id="KW-0812">Transmembrane</keyword>
<keyword id="KW-1133">Transmembrane helix</keyword>
<keyword id="KW-0813">Transport</keyword>
<evidence type="ECO:0000250" key="1"/>
<evidence type="ECO:0000255" key="2">
    <source>
        <dbReference type="HAMAP-Rule" id="MF_01344"/>
    </source>
</evidence>
<feature type="chain" id="PRO_0000061841" description="Cytochrome b6-f complex subunit 4">
    <location>
        <begin position="1"/>
        <end position="160"/>
    </location>
</feature>
<feature type="transmembrane region" description="Helical" evidence="2">
    <location>
        <begin position="36"/>
        <end position="56"/>
    </location>
</feature>
<feature type="transmembrane region" description="Helical" evidence="2">
    <location>
        <begin position="95"/>
        <end position="115"/>
    </location>
</feature>
<feature type="transmembrane region" description="Helical" evidence="2">
    <location>
        <begin position="131"/>
        <end position="151"/>
    </location>
</feature>
<organism>
    <name type="scientific">Acorus calamus</name>
    <name type="common">Sweet flag</name>
    <dbReference type="NCBI Taxonomy" id="4465"/>
    <lineage>
        <taxon>Eukaryota</taxon>
        <taxon>Viridiplantae</taxon>
        <taxon>Streptophyta</taxon>
        <taxon>Embryophyta</taxon>
        <taxon>Tracheophyta</taxon>
        <taxon>Spermatophyta</taxon>
        <taxon>Magnoliopsida</taxon>
        <taxon>Liliopsida</taxon>
        <taxon>Acoraceae</taxon>
        <taxon>Acorus</taxon>
    </lineage>
</organism>
<proteinExistence type="inferred from homology"/>
<gene>
    <name evidence="2" type="primary">petD</name>
</gene>
<comment type="function">
    <text evidence="2">Component of the cytochrome b6-f complex, which mediates electron transfer between photosystem II (PSII) and photosystem I (PSI), cyclic electron flow around PSI, and state transitions.</text>
</comment>
<comment type="subunit">
    <text evidence="1">The 4 large subunits of the cytochrome b6-f complex are cytochrome b6, subunit IV (17 kDa polypeptide, petD), cytochrome f and the Rieske protein, while the 4 small subunits are petG, petL, petM and petN. The complex functions as a dimer (By similarity).</text>
</comment>
<comment type="subcellular location">
    <subcellularLocation>
        <location evidence="2">Plastid</location>
        <location evidence="2">Chloroplast thylakoid membrane</location>
        <topology evidence="2">Multi-pass membrane protein</topology>
    </subcellularLocation>
</comment>
<comment type="similarity">
    <text evidence="2">Belongs to the cytochrome b family. PetD subfamily.</text>
</comment>
<geneLocation type="chloroplast"/>
<protein>
    <recommendedName>
        <fullName evidence="2">Cytochrome b6-f complex subunit 4</fullName>
    </recommendedName>
    <alternativeName>
        <fullName evidence="2">17 kDa polypeptide</fullName>
    </alternativeName>
</protein>
<sequence>MGVTKKPDLNDPVLRAKLAKGMGHNYYGEPAWPNDLLYIFPVVILGTIACNVGLAILEPSMIGEPADPFATPLEILPEWYFFPVFQILRTVPNKLLGVLLMASVPLGLFTVPFLENVNKFQNPFRRPVATTVFLIGTAVALWLGIGATLPIDKSLTLGLF</sequence>
<accession>Q3V503</accession>
<reference key="1">
    <citation type="journal article" date="2005" name="Mol. Biol. Evol.">
        <title>Analysis of Acorus calamus chloroplast genome and its phylogenetic implications.</title>
        <authorList>
            <person name="Goremykin V.V."/>
            <person name="Holland B."/>
            <person name="Hirsch-Ernst K.I."/>
            <person name="Hellwig F.H."/>
        </authorList>
    </citation>
    <scope>NUCLEOTIDE SEQUENCE [LARGE SCALE GENOMIC DNA]</scope>
</reference>
<name>PETD_ACOCL</name>
<dbReference type="EMBL" id="AJ879453">
    <property type="protein sequence ID" value="CAI53825.1"/>
    <property type="molecule type" value="Genomic_DNA"/>
</dbReference>
<dbReference type="RefSeq" id="YP_319794.1">
    <property type="nucleotide sequence ID" value="NC_007407.1"/>
</dbReference>
<dbReference type="SMR" id="Q3V503"/>
<dbReference type="GeneID" id="3677491"/>
<dbReference type="GO" id="GO:0009535">
    <property type="term" value="C:chloroplast thylakoid membrane"/>
    <property type="evidence" value="ECO:0007669"/>
    <property type="project" value="UniProtKB-SubCell"/>
</dbReference>
<dbReference type="GO" id="GO:0045158">
    <property type="term" value="F:electron transporter, transferring electrons within cytochrome b6/f complex of photosystem II activity"/>
    <property type="evidence" value="ECO:0007669"/>
    <property type="project" value="UniProtKB-UniRule"/>
</dbReference>
<dbReference type="GO" id="GO:0045156">
    <property type="term" value="F:electron transporter, transferring electrons within the cyclic electron transport pathway of photosynthesis activity"/>
    <property type="evidence" value="ECO:0007669"/>
    <property type="project" value="InterPro"/>
</dbReference>
<dbReference type="GO" id="GO:0016491">
    <property type="term" value="F:oxidoreductase activity"/>
    <property type="evidence" value="ECO:0007669"/>
    <property type="project" value="InterPro"/>
</dbReference>
<dbReference type="GO" id="GO:0009767">
    <property type="term" value="P:photosynthetic electron transport chain"/>
    <property type="evidence" value="ECO:0007669"/>
    <property type="project" value="InterPro"/>
</dbReference>
<dbReference type="CDD" id="cd00290">
    <property type="entry name" value="cytochrome_b_C"/>
    <property type="match status" value="1"/>
</dbReference>
<dbReference type="FunFam" id="1.10.287.980:FF:000001">
    <property type="entry name" value="Cytochrome b6-f complex subunit 4"/>
    <property type="match status" value="1"/>
</dbReference>
<dbReference type="FunFam" id="1.20.5.510:FF:000002">
    <property type="entry name" value="Cytochrome b6-f complex subunit 4"/>
    <property type="match status" value="1"/>
</dbReference>
<dbReference type="Gene3D" id="1.10.287.980">
    <property type="entry name" value="plastocyanin oxidoreductase"/>
    <property type="match status" value="1"/>
</dbReference>
<dbReference type="Gene3D" id="1.20.5.510">
    <property type="entry name" value="Single helix bin"/>
    <property type="match status" value="1"/>
</dbReference>
<dbReference type="HAMAP" id="MF_01344">
    <property type="entry name" value="Cytb6_f_subIV"/>
    <property type="match status" value="1"/>
</dbReference>
<dbReference type="InterPro" id="IPR005798">
    <property type="entry name" value="Cyt_b/b6_C"/>
</dbReference>
<dbReference type="InterPro" id="IPR036150">
    <property type="entry name" value="Cyt_b/b6_C_sf"/>
</dbReference>
<dbReference type="InterPro" id="IPR005870">
    <property type="entry name" value="Cyt_b6/f_cplx_suIV"/>
</dbReference>
<dbReference type="InterPro" id="IPR048260">
    <property type="entry name" value="Cytochrome_b_C_euk/bac"/>
</dbReference>
<dbReference type="NCBIfam" id="TIGR01156">
    <property type="entry name" value="cytb6_f_IV"/>
    <property type="match status" value="1"/>
</dbReference>
<dbReference type="PANTHER" id="PTHR19271">
    <property type="entry name" value="CYTOCHROME B"/>
    <property type="match status" value="1"/>
</dbReference>
<dbReference type="PANTHER" id="PTHR19271:SF40">
    <property type="entry name" value="CYTOCHROME B"/>
    <property type="match status" value="1"/>
</dbReference>
<dbReference type="Pfam" id="PF00032">
    <property type="entry name" value="Cytochrom_B_C"/>
    <property type="match status" value="1"/>
</dbReference>
<dbReference type="PIRSF" id="PIRSF000033">
    <property type="entry name" value="B6f_17K"/>
    <property type="match status" value="1"/>
</dbReference>
<dbReference type="SUPFAM" id="SSF81648">
    <property type="entry name" value="a domain/subunit of cytochrome bc1 complex (Ubiquinol-cytochrome c reductase)"/>
    <property type="match status" value="1"/>
</dbReference>
<dbReference type="PROSITE" id="PS51003">
    <property type="entry name" value="CYTB_CTER"/>
    <property type="match status" value="1"/>
</dbReference>